<organism>
    <name type="scientific">Galerina marginata (strain CBS 339.88)</name>
    <dbReference type="NCBI Taxonomy" id="685588"/>
    <lineage>
        <taxon>Eukaryota</taxon>
        <taxon>Fungi</taxon>
        <taxon>Dikarya</taxon>
        <taxon>Basidiomycota</taxon>
        <taxon>Agaricomycotina</taxon>
        <taxon>Agaricomycetes</taxon>
        <taxon>Agaricomycetidae</taxon>
        <taxon>Agaricales</taxon>
        <taxon>Agaricineae</taxon>
        <taxon>Strophariaceae</taxon>
        <taxon>Galerina</taxon>
    </lineage>
</organism>
<proteinExistence type="evidence at protein level"/>
<feature type="chain" id="PRO_0000451268" description="Sesquiterpene synthase GALMADRAFT_104215">
    <location>
        <begin position="1"/>
        <end position="345"/>
    </location>
</feature>
<feature type="short sequence motif" description="DDXXD motif" evidence="1">
    <location>
        <begin position="91"/>
        <end position="95"/>
    </location>
</feature>
<feature type="binding site" evidence="2">
    <location>
        <position position="91"/>
    </location>
    <ligand>
        <name>Mg(2+)</name>
        <dbReference type="ChEBI" id="CHEBI:18420"/>
        <label>1</label>
    </ligand>
</feature>
<feature type="binding site" evidence="2">
    <location>
        <position position="91"/>
    </location>
    <ligand>
        <name>Mg(2+)</name>
        <dbReference type="ChEBI" id="CHEBI:18420"/>
        <label>2</label>
    </ligand>
</feature>
<feature type="binding site" evidence="2">
    <location>
        <position position="226"/>
    </location>
    <ligand>
        <name>Mg(2+)</name>
        <dbReference type="ChEBI" id="CHEBI:18420"/>
        <label>3</label>
    </ligand>
</feature>
<feature type="binding site" evidence="2">
    <location>
        <position position="230"/>
    </location>
    <ligand>
        <name>Mg(2+)</name>
        <dbReference type="ChEBI" id="CHEBI:18420"/>
        <label>3</label>
    </ligand>
</feature>
<feature type="binding site" evidence="2">
    <location>
        <position position="234"/>
    </location>
    <ligand>
        <name>Mg(2+)</name>
        <dbReference type="ChEBI" id="CHEBI:18420"/>
        <label>3</label>
    </ligand>
</feature>
<feature type="binding site" evidence="2">
    <location>
        <position position="316"/>
    </location>
    <ligand>
        <name>(2E,6E)-farnesyl diphosphate</name>
        <dbReference type="ChEBI" id="CHEBI:175763"/>
    </ligand>
</feature>
<feature type="binding site" evidence="2">
    <location>
        <position position="317"/>
    </location>
    <ligand>
        <name>(2E,6E)-farnesyl diphosphate</name>
        <dbReference type="ChEBI" id="CHEBI:175763"/>
    </ligand>
</feature>
<reference key="1">
    <citation type="journal article" date="2014" name="Proc. Natl. Acad. Sci. U.S.A.">
        <title>Extensive sampling of basidiomycete genomes demonstrates inadequacy of the white-rot/brown-rot paradigm for wood decay fungi.</title>
        <authorList>
            <person name="Riley R."/>
            <person name="Salamov A.A."/>
            <person name="Brown D.W."/>
            <person name="Nagy L.G."/>
            <person name="Floudas D."/>
            <person name="Held B.W."/>
            <person name="Levasseur A."/>
            <person name="Lombard V."/>
            <person name="Morin E."/>
            <person name="Otillar R."/>
            <person name="Lindquist E.A."/>
            <person name="Sun H."/>
            <person name="LaButti K.M."/>
            <person name="Schmutz J."/>
            <person name="Jabbour D."/>
            <person name="Luo H."/>
            <person name="Baker S.E."/>
            <person name="Pisabarro A.G."/>
            <person name="Walton J.D."/>
            <person name="Blanchette R.A."/>
            <person name="Henrissat B."/>
            <person name="Martin F."/>
            <person name="Cullen D."/>
            <person name="Hibbett D.S."/>
            <person name="Grigoriev I.V."/>
        </authorList>
    </citation>
    <scope>NUCLEOTIDE SEQUENCE [LARGE SCALE GENOMIC DNA]</scope>
    <source>
        <strain>CBS 339.88</strain>
    </source>
</reference>
<reference key="2">
    <citation type="journal article" date="2020" name="ACS Chem. Biol.">
        <title>Agrocybe aegerita serves as a gateway for identifying sesquiterpene biosynthetic enzymes in higher fungi.</title>
        <authorList>
            <person name="Zhang C."/>
            <person name="Chen X."/>
            <person name="Orban A."/>
            <person name="Shukal S."/>
            <person name="Birk F."/>
            <person name="Too H.P."/>
            <person name="Ruehl M."/>
        </authorList>
    </citation>
    <scope>FUNCTION</scope>
    <scope>DOMAIN</scope>
    <scope>CATALYTIC ACTIVITY</scope>
</reference>
<accession>A0A067SEC9</accession>
<keyword id="KW-0456">Lyase</keyword>
<keyword id="KW-0460">Magnesium</keyword>
<keyword id="KW-0479">Metal-binding</keyword>
<keyword id="KW-1185">Reference proteome</keyword>
<comment type="function">
    <text evidence="3">Terpene cyclase that catalyzes the cyclization of farnesyl diphosphate (FPP) to beta-gurjunene.</text>
</comment>
<comment type="catalytic activity">
    <reaction evidence="3">
        <text>(2E,6E)-farnesyl diphosphate = beta-gurjunene + diphosphate</text>
        <dbReference type="Rhea" id="RHEA:83287"/>
        <dbReference type="ChEBI" id="CHEBI:33019"/>
        <dbReference type="ChEBI" id="CHEBI:80940"/>
        <dbReference type="ChEBI" id="CHEBI:175763"/>
    </reaction>
    <physiologicalReaction direction="left-to-right" evidence="6">
        <dbReference type="Rhea" id="RHEA:83288"/>
    </physiologicalReaction>
</comment>
<comment type="cofactor">
    <cofactor evidence="3">
        <name>Mg(2+)</name>
        <dbReference type="ChEBI" id="CHEBI:18420"/>
    </cofactor>
</comment>
<comment type="domain">
    <text evidence="3">The DDXXD motif is important for the catalytic activity, presumably through binding to Mg(2+).</text>
</comment>
<comment type="similarity">
    <text evidence="3">Belongs to the terpene synthase family.</text>
</comment>
<name>TERS_GALM3</name>
<protein>
    <recommendedName>
        <fullName evidence="4">Sesquiterpene synthase GALMADRAFT_104215</fullName>
        <ecNumber evidence="3">4.2.3.-</ecNumber>
    </recommendedName>
    <alternativeName>
        <fullName evidence="4">Terpene cyclase GALMADRAFT_104215</fullName>
    </alternativeName>
    <alternativeName>
        <fullName evidence="5">beta-gurjunene synthase</fullName>
    </alternativeName>
</protein>
<gene>
    <name type="ORF">GALMADRAFT_104215</name>
</gene>
<evidence type="ECO:0000250" key="1">
    <source>
        <dbReference type="UniProtKB" id="P0DL13"/>
    </source>
</evidence>
<evidence type="ECO:0000250" key="2">
    <source>
        <dbReference type="UniProtKB" id="Q9UR08"/>
    </source>
</evidence>
<evidence type="ECO:0000269" key="3">
    <source>
    </source>
</evidence>
<evidence type="ECO:0000303" key="4">
    <source>
    </source>
</evidence>
<evidence type="ECO:0000305" key="5"/>
<evidence type="ECO:0000305" key="6">
    <source>
    </source>
</evidence>
<sequence>MNTTTRTFYLPRLEDTFSVFPDNGLNPHYAECRIQSQAWIDKYYKIVCGPKMRAYMDHCKFELITAYTYPYASSDGLRKTMDLANILWLYDEFTDTLSGKDATNAAAIVIRTLRERDFDDGSWICHMMRDFYAAHIEKFGPNVSRRFIDHFCQYVEGTGTEAKHREKDHVLDINAYIIMRRAASAVLTAFDLAEYCLGIDLPQYVHDDPAFISGYNAGLDLVFLDNDLFSYDMEQAKGHCTTNIITVVMKSKRIDLQSAFDFTAGYCESLTQQLIAAQISLASRTDPVFSNNAVKCLEAIANWVKGSDGWSFATERYFGKQNVIVKETRAVEMRKSFQDIAVLKE</sequence>
<dbReference type="EC" id="4.2.3.-" evidence="3"/>
<dbReference type="EMBL" id="KL142403">
    <property type="protein sequence ID" value="KDR69261.1"/>
    <property type="molecule type" value="Genomic_DNA"/>
</dbReference>
<dbReference type="SMR" id="A0A067SEC9"/>
<dbReference type="HOGENOM" id="CLU_042538_2_1_1"/>
<dbReference type="OrthoDB" id="2861623at2759"/>
<dbReference type="Proteomes" id="UP000027222">
    <property type="component" value="Unassembled WGS sequence"/>
</dbReference>
<dbReference type="GO" id="GO:0046872">
    <property type="term" value="F:metal ion binding"/>
    <property type="evidence" value="ECO:0007669"/>
    <property type="project" value="UniProtKB-KW"/>
</dbReference>
<dbReference type="GO" id="GO:0010333">
    <property type="term" value="F:terpene synthase activity"/>
    <property type="evidence" value="ECO:0007669"/>
    <property type="project" value="InterPro"/>
</dbReference>
<dbReference type="GO" id="GO:0008299">
    <property type="term" value="P:isoprenoid biosynthetic process"/>
    <property type="evidence" value="ECO:0007669"/>
    <property type="project" value="UniProtKB-ARBA"/>
</dbReference>
<dbReference type="Gene3D" id="1.10.600.10">
    <property type="entry name" value="Farnesyl Diphosphate Synthase"/>
    <property type="match status" value="1"/>
</dbReference>
<dbReference type="InterPro" id="IPR008949">
    <property type="entry name" value="Isoprenoid_synthase_dom_sf"/>
</dbReference>
<dbReference type="InterPro" id="IPR034686">
    <property type="entry name" value="Terpene_cyclase-like_2"/>
</dbReference>
<dbReference type="PANTHER" id="PTHR35201:SF4">
    <property type="entry name" value="BETA-PINACENE SYNTHASE-RELATED"/>
    <property type="match status" value="1"/>
</dbReference>
<dbReference type="PANTHER" id="PTHR35201">
    <property type="entry name" value="TERPENE SYNTHASE"/>
    <property type="match status" value="1"/>
</dbReference>
<dbReference type="Pfam" id="PF19086">
    <property type="entry name" value="Terpene_syn_C_2"/>
    <property type="match status" value="1"/>
</dbReference>
<dbReference type="SFLD" id="SFLDS00005">
    <property type="entry name" value="Isoprenoid_Synthase_Type_I"/>
    <property type="match status" value="1"/>
</dbReference>
<dbReference type="SFLD" id="SFLDG01020">
    <property type="entry name" value="Terpene_Cyclase_Like_2"/>
    <property type="match status" value="1"/>
</dbReference>
<dbReference type="SUPFAM" id="SSF48576">
    <property type="entry name" value="Terpenoid synthases"/>
    <property type="match status" value="1"/>
</dbReference>